<organism>
    <name type="scientific">Echinococcus granulosus</name>
    <name type="common">Hydatid tapeworm</name>
    <dbReference type="NCBI Taxonomy" id="6210"/>
    <lineage>
        <taxon>Eukaryota</taxon>
        <taxon>Metazoa</taxon>
        <taxon>Spiralia</taxon>
        <taxon>Lophotrochozoa</taxon>
        <taxon>Platyhelminthes</taxon>
        <taxon>Cestoda</taxon>
        <taxon>Eucestoda</taxon>
        <taxon>Cyclophyllidea</taxon>
        <taxon>Taeniidae</taxon>
        <taxon>Echinococcus</taxon>
        <taxon>Echinococcus granulosus group</taxon>
    </lineage>
</organism>
<reference key="1">
    <citation type="journal article" date="1993" name="Mol. Biochem. Parasitol.">
        <title>Molecular cloning and characterization of actin genes from Echinococcus granulosus.</title>
        <authorList>
            <person name="da Silva C.M."/>
            <person name="Ferreira H.B."/>
            <person name="Picon M."/>
            <person name="Gorfinkiel N."/>
            <person name="Ehrlich R."/>
            <person name="Zaha A."/>
        </authorList>
    </citation>
    <scope>NUCLEOTIDE SEQUENCE [GENOMIC DNA]</scope>
</reference>
<comment type="function">
    <text>Actins are highly conserved proteins that are involved in various types of cell motility and are ubiquitously expressed in all eukaryotic cells.</text>
</comment>
<comment type="catalytic activity">
    <reaction evidence="1">
        <text>ATP + H2O = ADP + phosphate + H(+)</text>
        <dbReference type="Rhea" id="RHEA:13065"/>
        <dbReference type="ChEBI" id="CHEBI:15377"/>
        <dbReference type="ChEBI" id="CHEBI:15378"/>
        <dbReference type="ChEBI" id="CHEBI:30616"/>
        <dbReference type="ChEBI" id="CHEBI:43474"/>
        <dbReference type="ChEBI" id="CHEBI:456216"/>
    </reaction>
</comment>
<comment type="subcellular location">
    <subcellularLocation>
        <location>Cytoplasm</location>
        <location>Cytoskeleton</location>
    </subcellularLocation>
</comment>
<comment type="similarity">
    <text evidence="2">Belongs to the actin family.</text>
</comment>
<proteinExistence type="inferred from homology"/>
<evidence type="ECO:0000250" key="1">
    <source>
        <dbReference type="UniProtKB" id="P68137"/>
    </source>
</evidence>
<evidence type="ECO:0000305" key="2"/>
<accession>P35432</accession>
<gene>
    <name type="primary">ACTI</name>
</gene>
<keyword id="KW-0067">ATP-binding</keyword>
<keyword id="KW-0963">Cytoplasm</keyword>
<keyword id="KW-0206">Cytoskeleton</keyword>
<keyword id="KW-0378">Hydrolase</keyword>
<keyword id="KW-0547">Nucleotide-binding</keyword>
<dbReference type="EC" id="3.6.4.-" evidence="1"/>
<dbReference type="EMBL" id="L07773">
    <property type="protein sequence ID" value="AAC80573.1"/>
    <property type="molecule type" value="Genomic_DNA"/>
</dbReference>
<dbReference type="SMR" id="P35432"/>
<dbReference type="OrthoDB" id="10249208at2759"/>
<dbReference type="Proteomes" id="UP000492820">
    <property type="component" value="Unplaced"/>
</dbReference>
<dbReference type="GO" id="GO:0005737">
    <property type="term" value="C:cytoplasm"/>
    <property type="evidence" value="ECO:0007669"/>
    <property type="project" value="UniProtKB-KW"/>
</dbReference>
<dbReference type="GO" id="GO:0005856">
    <property type="term" value="C:cytoskeleton"/>
    <property type="evidence" value="ECO:0007669"/>
    <property type="project" value="UniProtKB-SubCell"/>
</dbReference>
<dbReference type="GO" id="GO:0005524">
    <property type="term" value="F:ATP binding"/>
    <property type="evidence" value="ECO:0007669"/>
    <property type="project" value="UniProtKB-KW"/>
</dbReference>
<dbReference type="GO" id="GO:0016787">
    <property type="term" value="F:hydrolase activity"/>
    <property type="evidence" value="ECO:0007669"/>
    <property type="project" value="UniProtKB-KW"/>
</dbReference>
<dbReference type="CDD" id="cd10224">
    <property type="entry name" value="ASKHA_NBD_actin"/>
    <property type="match status" value="1"/>
</dbReference>
<dbReference type="FunFam" id="2.30.36.70:FF:000001">
    <property type="entry name" value="Actin, alpha skeletal muscle"/>
    <property type="match status" value="1"/>
</dbReference>
<dbReference type="FunFam" id="3.30.420.40:FF:000291">
    <property type="entry name" value="Actin, alpha skeletal muscle"/>
    <property type="match status" value="1"/>
</dbReference>
<dbReference type="FunFam" id="3.90.640.10:FF:000047">
    <property type="entry name" value="Actin, alpha skeletal muscle"/>
    <property type="match status" value="1"/>
</dbReference>
<dbReference type="FunFam" id="3.30.420.40:FF:000404">
    <property type="entry name" value="Major actin"/>
    <property type="match status" value="1"/>
</dbReference>
<dbReference type="FunFam" id="3.30.420.40:FF:000058">
    <property type="entry name" value="Putative actin-related protein 5"/>
    <property type="match status" value="1"/>
</dbReference>
<dbReference type="Gene3D" id="3.30.420.40">
    <property type="match status" value="2"/>
</dbReference>
<dbReference type="Gene3D" id="3.90.640.10">
    <property type="entry name" value="Actin, Chain A, domain 4"/>
    <property type="match status" value="1"/>
</dbReference>
<dbReference type="InterPro" id="IPR004000">
    <property type="entry name" value="Actin"/>
</dbReference>
<dbReference type="InterPro" id="IPR020902">
    <property type="entry name" value="Actin/actin-like_CS"/>
</dbReference>
<dbReference type="InterPro" id="IPR004001">
    <property type="entry name" value="Actin_CS"/>
</dbReference>
<dbReference type="InterPro" id="IPR043129">
    <property type="entry name" value="ATPase_NBD"/>
</dbReference>
<dbReference type="PANTHER" id="PTHR11937">
    <property type="entry name" value="ACTIN"/>
    <property type="match status" value="1"/>
</dbReference>
<dbReference type="Pfam" id="PF00022">
    <property type="entry name" value="Actin"/>
    <property type="match status" value="1"/>
</dbReference>
<dbReference type="PRINTS" id="PR00190">
    <property type="entry name" value="ACTIN"/>
</dbReference>
<dbReference type="SMART" id="SM00268">
    <property type="entry name" value="ACTIN"/>
    <property type="match status" value="1"/>
</dbReference>
<dbReference type="SUPFAM" id="SSF53067">
    <property type="entry name" value="Actin-like ATPase domain"/>
    <property type="match status" value="2"/>
</dbReference>
<dbReference type="PROSITE" id="PS00406">
    <property type="entry name" value="ACTINS_1"/>
    <property type="match status" value="1"/>
</dbReference>
<dbReference type="PROSITE" id="PS00432">
    <property type="entry name" value="ACTINS_2"/>
    <property type="match status" value="1"/>
</dbReference>
<dbReference type="PROSITE" id="PS01132">
    <property type="entry name" value="ACTINS_ACT_LIKE"/>
    <property type="match status" value="1"/>
</dbReference>
<sequence>MAEEITPLVVDNGSGMCKAGFAGDDSPRAVFPSLVGRPRQQSIMVGMGNKDSYVGDEAQSKRGILTLKYPIEHGIVTNWDDMEKIWHHTFYNELRVAPEEHPVLLTEAPLNPKANREKMTQIMFETFNVRAMYVAIQAVLSLYASGRTTGIVLDSGDGVSHTVPIYEGYALPHAILRLDLAGRDLTDWLTKLLTERGYAFTTTAELEIVRDIKEKLCYVALDFENEMATAATSSSLEKTYELPDGQVITVGNERFRCPEALYQPSFLGLECNGIHETTYNSIMKCDLDIRKDLYSNVVLSGGSTMYPGIADRMNKDLTALAPTTMKIKIIAPPERKYSVWIGGSILASLSTFQQMWITKQEYDESGPSIVHRKCF</sequence>
<name>ACT1_ECHGR</name>
<protein>
    <recommendedName>
        <fullName>Actin-1</fullName>
        <ecNumber evidence="1">3.6.4.-</ecNumber>
    </recommendedName>
</protein>
<feature type="chain" id="PRO_0000088933" description="Actin-1">
    <location>
        <begin position="1"/>
        <end position="375"/>
    </location>
</feature>